<name>GLT11_XENTR</name>
<reference key="1">
    <citation type="submission" date="2004-06" db="EMBL/GenBank/DDBJ databases">
        <authorList>
            <consortium name="NIH - Xenopus Gene Collection (XGC) project"/>
        </authorList>
    </citation>
    <scope>NUCLEOTIDE SEQUENCE [LARGE SCALE MRNA]</scope>
    <source>
        <tissue>Embryo</tissue>
    </source>
</reference>
<reference key="2">
    <citation type="journal article" date="2013" name="Nature">
        <title>The heterotaxy gene GALNT11 glycosylates Notch to orchestrate cilia type and laterality.</title>
        <authorList>
            <person name="Boskovski M.T."/>
            <person name="Yuan S."/>
            <person name="Pedersen N.B."/>
            <person name="Goth C.K."/>
            <person name="Makova S."/>
            <person name="Clausen H."/>
            <person name="Brueckner M."/>
            <person name="Khokha M.K."/>
        </authorList>
    </citation>
    <scope>FUNCTION</scope>
    <scope>DISRUPTION PHENOTYPE</scope>
    <scope>INTERACTION WITH NOTCH1</scope>
</reference>
<comment type="function">
    <text evidence="4">Polypeptide N-acetylgalactosaminyltransferase that catalyzes the initiation of protein O-linked glycosylation and is involved in left/right asymmetry by mediating O-glycosylation of NOTCH1. O-glycosylation of NOTCH1 promotes activation of NOTCH1, modulating the balance between motile and immotile (sensory) cilia at the left-right organiser (LRO). Polypeptide N-acetylgalactosaminyltransferases catalyze the transfer of an N-acetyl-D-galactosamine residue to a serine or threonine residue on the protein receptor.</text>
</comment>
<comment type="catalytic activity">
    <reaction>
        <text>L-seryl-[protein] + UDP-N-acetyl-alpha-D-galactosamine = a 3-O-[N-acetyl-alpha-D-galactosaminyl]-L-seryl-[protein] + UDP + H(+)</text>
        <dbReference type="Rhea" id="RHEA:23956"/>
        <dbReference type="Rhea" id="RHEA-COMP:9863"/>
        <dbReference type="Rhea" id="RHEA-COMP:12788"/>
        <dbReference type="ChEBI" id="CHEBI:15378"/>
        <dbReference type="ChEBI" id="CHEBI:29999"/>
        <dbReference type="ChEBI" id="CHEBI:53604"/>
        <dbReference type="ChEBI" id="CHEBI:58223"/>
        <dbReference type="ChEBI" id="CHEBI:67138"/>
        <dbReference type="EC" id="2.4.1.41"/>
    </reaction>
</comment>
<comment type="catalytic activity">
    <reaction>
        <text>L-threonyl-[protein] + UDP-N-acetyl-alpha-D-galactosamine = a 3-O-[N-acetyl-alpha-D-galactosaminyl]-L-threonyl-[protein] + UDP + H(+)</text>
        <dbReference type="Rhea" id="RHEA:52424"/>
        <dbReference type="Rhea" id="RHEA-COMP:11060"/>
        <dbReference type="Rhea" id="RHEA-COMP:11689"/>
        <dbReference type="ChEBI" id="CHEBI:15378"/>
        <dbReference type="ChEBI" id="CHEBI:30013"/>
        <dbReference type="ChEBI" id="CHEBI:58223"/>
        <dbReference type="ChEBI" id="CHEBI:67138"/>
        <dbReference type="ChEBI" id="CHEBI:87075"/>
        <dbReference type="EC" id="2.4.1.41"/>
    </reaction>
</comment>
<comment type="cofactor">
    <cofactor evidence="1">
        <name>Mn(2+)</name>
        <dbReference type="ChEBI" id="CHEBI:29035"/>
    </cofactor>
</comment>
<comment type="cofactor">
    <cofactor evidence="1">
        <name>Ca(2+)</name>
        <dbReference type="ChEBI" id="CHEBI:29108"/>
    </cofactor>
</comment>
<comment type="pathway">
    <text>Protein modification; protein glycosylation.</text>
</comment>
<comment type="subunit">
    <text evidence="4">Interacts with notch1.</text>
</comment>
<comment type="subcellular location">
    <subcellularLocation>
        <location evidence="1">Golgi apparatus membrane</location>
        <topology evidence="1">Single-pass type II membrane protein</topology>
    </subcellularLocation>
</comment>
<comment type="domain">
    <text evidence="1">There are two conserved domains in the glycosyltransferase region: the N-terminal domain (domain A, also called GT1 motif), which is probably involved in manganese coordination and substrate binding and the C-terminal domain (domain B, also called Gal/GalNAc-T motif), which is probably involved in catalytic reaction and UDP-Gal binding.</text>
</comment>
<comment type="domain">
    <text evidence="1">The ricin B-type lectin domain binds to GalNAc and contributes to the glycopeptide specificity.</text>
</comment>
<comment type="disruption phenotype">
    <text evidence="4">Aberrant left-right patterning resulting in abnormal cardiac loops, including leftward and symmetric/midline loops.</text>
</comment>
<comment type="similarity">
    <text evidence="5">Belongs to the glycosyltransferase 2 family. GalNAc-T subfamily.</text>
</comment>
<comment type="sequence caution" evidence="5">
    <conflict type="frameshift">
        <sequence resource="EMBL-CDS" id="AAH75106"/>
    </conflict>
</comment>
<gene>
    <name type="primary">galnt11</name>
</gene>
<proteinExistence type="evidence at protein level"/>
<protein>
    <recommendedName>
        <fullName>Polypeptide N-acetylgalactosaminyltransferase 11</fullName>
        <ecNumber>2.4.1.41</ecNumber>
    </recommendedName>
    <alternativeName>
        <fullName>Polypeptide GalNAc transferase 11</fullName>
        <shortName>GalNAc-T11</shortName>
        <shortName>pp-GaNTase 11</shortName>
    </alternativeName>
    <alternativeName>
        <fullName>Protein-UDP acetylgalactosaminyltransferase 11</fullName>
    </alternativeName>
    <alternativeName>
        <fullName>UDP-GalNAc:polypeptide N-acetylgalactosaminyltransferase 11</fullName>
    </alternativeName>
</protein>
<feature type="chain" id="PRO_0000425208" description="Polypeptide N-acetylgalactosaminyltransferase 11">
    <location>
        <begin position="1"/>
        <end position="601"/>
    </location>
</feature>
<feature type="topological domain" description="Cytoplasmic" evidence="2">
    <location>
        <begin position="1"/>
        <end position="7"/>
    </location>
</feature>
<feature type="transmembrane region" description="Helical; Signal-anchor for type II membrane protein" evidence="2">
    <location>
        <begin position="8"/>
        <end position="28"/>
    </location>
</feature>
<feature type="topological domain" description="Lumenal" evidence="2">
    <location>
        <begin position="29"/>
        <end position="601"/>
    </location>
</feature>
<feature type="domain" description="Ricin B-type lectin" evidence="3">
    <location>
        <begin position="469"/>
        <end position="600"/>
    </location>
</feature>
<feature type="region of interest" description="Catalytic subdomain A" evidence="1">
    <location>
        <begin position="143"/>
        <end position="254"/>
    </location>
</feature>
<feature type="region of interest" description="Catalytic subdomain B" evidence="1">
    <location>
        <begin position="312"/>
        <end position="374"/>
    </location>
</feature>
<feature type="glycosylation site" description="N-linked (GlcNAc...) asparagine" evidence="2">
    <location>
        <position position="29"/>
    </location>
</feature>
<feature type="glycosylation site" description="N-linked (GlcNAc...) asparagine" evidence="2">
    <location>
        <position position="202"/>
    </location>
</feature>
<feature type="glycosylation site" description="N-linked (GlcNAc...) asparagine" evidence="2">
    <location>
        <position position="508"/>
    </location>
</feature>
<feature type="disulfide bond" evidence="3">
    <location>
        <begin position="486"/>
        <end position="505"/>
    </location>
</feature>
<feature type="disulfide bond" evidence="3">
    <location>
        <begin position="529"/>
        <end position="546"/>
    </location>
</feature>
<feature type="disulfide bond" evidence="3">
    <location>
        <begin position="571"/>
        <end position="589"/>
    </location>
</feature>
<sequence length="601" mass="68383">MGSAALRCFCYGCLFTSVTWTLLLFIYFNFSEESQGFRHVPVKGLEPYKPLPKKIYPRFSRDSMGQHSDPRKGHNGNQLETEANADLSPELGMIFNEQDQDVRDVGYQKHAFNLLISNRLGYHRDVPDTRDSKCAKKTYPPDLPMASIVICFYNEAFSALLRTVHSVLDRTPAQLLHEIILVDDNSELDDLKKDLDGYMQENLSKKVKLVRNKQREGLIRGRMVGASHATGDVLVFLDSHCEVNEMWLQPLLAPIKENPRTVVCPVIDIISADTLIYSSSPVVRGGFNWGLHFKWDPVPLAELGGPEGFSAPFRSPTMAGGLFAMDREYFNMLGQYDSGMDIWGGENLEISFRIWMCGGSLLIVPCSRVGHIFRKRRPYGSPGGHDTMAHNSLRLAHVWMDEYKDQYFALRPELRNRDFGDIRERLALRRRLNCKSFKWYLDNIYPEMQVSGPNAKPQPPVFMNKGQKRPKILQRGRLINMQTNRCLVAQGHPSQKGGLVVAKECDYNDSEQVWSYNEEHELILSNLLCLDMSETRSSDPPRLMKCHGSGGSQQWVFGKSNRLYQVSVGQCLKLVDPMSRKGYVSMAICDGSPSQQWHLEN</sequence>
<keyword id="KW-0106">Calcium</keyword>
<keyword id="KW-1015">Disulfide bond</keyword>
<keyword id="KW-0325">Glycoprotein</keyword>
<keyword id="KW-0328">Glycosyltransferase</keyword>
<keyword id="KW-0333">Golgi apparatus</keyword>
<keyword id="KW-0430">Lectin</keyword>
<keyword id="KW-0464">Manganese</keyword>
<keyword id="KW-0472">Membrane</keyword>
<keyword id="KW-0914">Notch signaling pathway</keyword>
<keyword id="KW-1185">Reference proteome</keyword>
<keyword id="KW-0735">Signal-anchor</keyword>
<keyword id="KW-0808">Transferase</keyword>
<keyword id="KW-0812">Transmembrane</keyword>
<keyword id="KW-1133">Transmembrane helix</keyword>
<organism>
    <name type="scientific">Xenopus tropicalis</name>
    <name type="common">Western clawed frog</name>
    <name type="synonym">Silurana tropicalis</name>
    <dbReference type="NCBI Taxonomy" id="8364"/>
    <lineage>
        <taxon>Eukaryota</taxon>
        <taxon>Metazoa</taxon>
        <taxon>Chordata</taxon>
        <taxon>Craniata</taxon>
        <taxon>Vertebrata</taxon>
        <taxon>Euteleostomi</taxon>
        <taxon>Amphibia</taxon>
        <taxon>Batrachia</taxon>
        <taxon>Anura</taxon>
        <taxon>Pipoidea</taxon>
        <taxon>Pipidae</taxon>
        <taxon>Xenopodinae</taxon>
        <taxon>Xenopus</taxon>
        <taxon>Silurana</taxon>
    </lineage>
</organism>
<dbReference type="EC" id="2.4.1.41"/>
<dbReference type="EMBL" id="BC075106">
    <property type="protein sequence ID" value="AAH75106.1"/>
    <property type="status" value="ALT_FRAME"/>
    <property type="molecule type" value="mRNA"/>
</dbReference>
<dbReference type="RefSeq" id="NP_001006904.1">
    <property type="nucleotide sequence ID" value="NM_001006903.1"/>
</dbReference>
<dbReference type="RefSeq" id="XP_031759178.1">
    <property type="nucleotide sequence ID" value="XM_031903318.1"/>
</dbReference>
<dbReference type="SMR" id="Q6DJR8"/>
<dbReference type="FunCoup" id="Q6DJR8">
    <property type="interactions" value="615"/>
</dbReference>
<dbReference type="STRING" id="8364.ENSXETP00000038939"/>
<dbReference type="CAZy" id="CBM13">
    <property type="family name" value="Carbohydrate-Binding Module Family 13"/>
</dbReference>
<dbReference type="CAZy" id="GT27">
    <property type="family name" value="Glycosyltransferase Family 27"/>
</dbReference>
<dbReference type="GlyCosmos" id="Q6DJR8">
    <property type="glycosylation" value="3 sites, No reported glycans"/>
</dbReference>
<dbReference type="DNASU" id="448751"/>
<dbReference type="GeneID" id="448751"/>
<dbReference type="KEGG" id="xtr:448751"/>
<dbReference type="AGR" id="Xenbase:XB-GENE-981830"/>
<dbReference type="CTD" id="63917"/>
<dbReference type="Xenbase" id="XB-GENE-981830">
    <property type="gene designation" value="galnt11"/>
</dbReference>
<dbReference type="InParanoid" id="Q6DJR8"/>
<dbReference type="OMA" id="PVFQPWH"/>
<dbReference type="OrthoDB" id="5988548at2759"/>
<dbReference type="Reactome" id="R-XTR-913709">
    <property type="pathway name" value="O-linked glycosylation of mucins"/>
</dbReference>
<dbReference type="UniPathway" id="UPA00378"/>
<dbReference type="Proteomes" id="UP000008143">
    <property type="component" value="Chromosome 6"/>
</dbReference>
<dbReference type="Bgee" id="ENSXETG00000040522">
    <property type="expression patterns" value="Expressed in mesonephros and 12 other cell types or tissues"/>
</dbReference>
<dbReference type="GO" id="GO:0000139">
    <property type="term" value="C:Golgi membrane"/>
    <property type="evidence" value="ECO:0007669"/>
    <property type="project" value="UniProtKB-SubCell"/>
</dbReference>
<dbReference type="GO" id="GO:0030246">
    <property type="term" value="F:carbohydrate binding"/>
    <property type="evidence" value="ECO:0007669"/>
    <property type="project" value="UniProtKB-KW"/>
</dbReference>
<dbReference type="GO" id="GO:0005112">
    <property type="term" value="F:Notch binding"/>
    <property type="evidence" value="ECO:0000314"/>
    <property type="project" value="UniProtKB"/>
</dbReference>
<dbReference type="GO" id="GO:0004653">
    <property type="term" value="F:polypeptide N-acetylgalactosaminyltransferase activity"/>
    <property type="evidence" value="ECO:0000314"/>
    <property type="project" value="UniProtKB"/>
</dbReference>
<dbReference type="GO" id="GO:0060271">
    <property type="term" value="P:cilium assembly"/>
    <property type="evidence" value="ECO:0000315"/>
    <property type="project" value="UniProtKB"/>
</dbReference>
<dbReference type="GO" id="GO:0007368">
    <property type="term" value="P:determination of left/right symmetry"/>
    <property type="evidence" value="ECO:0000315"/>
    <property type="project" value="UniProtKB"/>
</dbReference>
<dbReference type="GO" id="GO:0007220">
    <property type="term" value="P:Notch receptor processing"/>
    <property type="evidence" value="ECO:0000315"/>
    <property type="project" value="UniProtKB"/>
</dbReference>
<dbReference type="GO" id="GO:0061314">
    <property type="term" value="P:Notch signaling involved in heart development"/>
    <property type="evidence" value="ECO:0000315"/>
    <property type="project" value="UniProtKB"/>
</dbReference>
<dbReference type="GO" id="GO:0018243">
    <property type="term" value="P:protein O-linked glycosylation via threonine"/>
    <property type="evidence" value="ECO:0000314"/>
    <property type="project" value="UniProtKB"/>
</dbReference>
<dbReference type="GO" id="GO:0008593">
    <property type="term" value="P:regulation of Notch signaling pathway"/>
    <property type="evidence" value="ECO:0000315"/>
    <property type="project" value="UniProtKB"/>
</dbReference>
<dbReference type="CDD" id="cd23440">
    <property type="entry name" value="beta-trefoil_Ricin_GALNT11"/>
    <property type="match status" value="1"/>
</dbReference>
<dbReference type="CDD" id="cd02510">
    <property type="entry name" value="pp-GalNAc-T"/>
    <property type="match status" value="1"/>
</dbReference>
<dbReference type="FunFam" id="2.80.10.50:FF:000029">
    <property type="entry name" value="Polypeptide N-acetylgalactosaminyltransferase"/>
    <property type="match status" value="1"/>
</dbReference>
<dbReference type="FunFam" id="3.90.550.10:FF:000053">
    <property type="entry name" value="Polypeptide N-acetylgalactosaminyltransferase"/>
    <property type="match status" value="1"/>
</dbReference>
<dbReference type="Gene3D" id="2.80.10.50">
    <property type="match status" value="1"/>
</dbReference>
<dbReference type="Gene3D" id="3.90.550.10">
    <property type="entry name" value="Spore Coat Polysaccharide Biosynthesis Protein SpsA, Chain A"/>
    <property type="match status" value="1"/>
</dbReference>
<dbReference type="InterPro" id="IPR045885">
    <property type="entry name" value="GalNAc-T"/>
</dbReference>
<dbReference type="InterPro" id="IPR001173">
    <property type="entry name" value="Glyco_trans_2-like"/>
</dbReference>
<dbReference type="InterPro" id="IPR029044">
    <property type="entry name" value="Nucleotide-diphossugar_trans"/>
</dbReference>
<dbReference type="InterPro" id="IPR035992">
    <property type="entry name" value="Ricin_B-like_lectins"/>
</dbReference>
<dbReference type="InterPro" id="IPR000772">
    <property type="entry name" value="Ricin_B_lectin"/>
</dbReference>
<dbReference type="PANTHER" id="PTHR11675">
    <property type="entry name" value="N-ACETYLGALACTOSAMINYLTRANSFERASE"/>
    <property type="match status" value="1"/>
</dbReference>
<dbReference type="PANTHER" id="PTHR11675:SF63">
    <property type="entry name" value="POLYPEPTIDE N-ACETYLGALACTOSAMINYLTRANSFERASE"/>
    <property type="match status" value="1"/>
</dbReference>
<dbReference type="Pfam" id="PF00535">
    <property type="entry name" value="Glycos_transf_2"/>
    <property type="match status" value="1"/>
</dbReference>
<dbReference type="Pfam" id="PF00652">
    <property type="entry name" value="Ricin_B_lectin"/>
    <property type="match status" value="1"/>
</dbReference>
<dbReference type="SMART" id="SM00458">
    <property type="entry name" value="RICIN"/>
    <property type="match status" value="1"/>
</dbReference>
<dbReference type="SUPFAM" id="SSF53448">
    <property type="entry name" value="Nucleotide-diphospho-sugar transferases"/>
    <property type="match status" value="1"/>
</dbReference>
<dbReference type="SUPFAM" id="SSF50370">
    <property type="entry name" value="Ricin B-like lectins"/>
    <property type="match status" value="1"/>
</dbReference>
<dbReference type="PROSITE" id="PS50231">
    <property type="entry name" value="RICIN_B_LECTIN"/>
    <property type="match status" value="1"/>
</dbReference>
<evidence type="ECO:0000250" key="1"/>
<evidence type="ECO:0000255" key="2"/>
<evidence type="ECO:0000255" key="3">
    <source>
        <dbReference type="PROSITE-ProRule" id="PRU00174"/>
    </source>
</evidence>
<evidence type="ECO:0000269" key="4">
    <source>
    </source>
</evidence>
<evidence type="ECO:0000305" key="5"/>
<accession>Q6DJR8</accession>